<name>SPRNG_BOVIN</name>
<proteinExistence type="evidence at transcript level"/>
<reference key="1">
    <citation type="submission" date="2006-06" db="EMBL/GenBank/DDBJ databases">
        <authorList>
            <consortium name="NIH - Mammalian Gene Collection (MGC) project"/>
        </authorList>
    </citation>
    <scope>NUCLEOTIDE SEQUENCE [LARGE SCALE MRNA]</scope>
    <source>
        <strain>Hereford</strain>
        <tissue>Thalamus</tissue>
    </source>
</reference>
<accession>Q17QN8</accession>
<feature type="chain" id="PRO_0000294328" description="SREBP regulating gene protein">
    <location>
        <begin position="1"/>
        <end position="205"/>
    </location>
</feature>
<feature type="topological domain" description="Cytoplasmic" evidence="1">
    <location>
        <begin position="1"/>
        <end position="16"/>
    </location>
</feature>
<feature type="transmembrane region" description="Helical" evidence="2">
    <location>
        <begin position="17"/>
        <end position="35"/>
    </location>
</feature>
<feature type="topological domain" description="Lumenal" evidence="1">
    <location>
        <begin position="36"/>
        <end position="205"/>
    </location>
</feature>
<feature type="glycosylation site" description="N-linked (GlcNAc...) asparagine" evidence="2">
    <location>
        <position position="67"/>
    </location>
</feature>
<keyword id="KW-0325">Glycoprotein</keyword>
<keyword id="KW-0333">Golgi apparatus</keyword>
<keyword id="KW-0472">Membrane</keyword>
<keyword id="KW-1185">Reference proteome</keyword>
<keyword id="KW-0812">Transmembrane</keyword>
<keyword id="KW-1133">Transmembrane helix</keyword>
<gene>
    <name evidence="1" type="primary">SPRING</name>
</gene>
<sequence length="205" mass="23488">MVNLAAMVWRRLLRKRWVLALVFGLSLVYFLTSTFKQEERAVRDRNLLQVQDHDQPIPWKVQFNLGNSSRPSNQCRNSIQGKHLITDELGYVCERRDLLVNGCCNVNVPGTKQYCCDGCLSSGCCSAYEYCVSCCLQPNKQLLLERFLNRAAVAFQNLFMAVEDHFELCLAKCRTSSQSVQHENTYRDPIAKYCYGESPPELFPA</sequence>
<protein>
    <recommendedName>
        <fullName evidence="1">SREBP regulating gene protein</fullName>
    </recommendedName>
</protein>
<dbReference type="EMBL" id="BC118254">
    <property type="protein sequence ID" value="AAI18255.1"/>
    <property type="molecule type" value="mRNA"/>
</dbReference>
<dbReference type="RefSeq" id="NP_001069491.1">
    <property type="nucleotide sequence ID" value="NM_001076023.1"/>
</dbReference>
<dbReference type="SMR" id="Q17QN8"/>
<dbReference type="FunCoup" id="Q17QN8">
    <property type="interactions" value="2434"/>
</dbReference>
<dbReference type="STRING" id="9913.ENSBTAP00000055975"/>
<dbReference type="GlyCosmos" id="Q17QN8">
    <property type="glycosylation" value="1 site, No reported glycans"/>
</dbReference>
<dbReference type="GlyGen" id="Q17QN8">
    <property type="glycosylation" value="1 site"/>
</dbReference>
<dbReference type="PaxDb" id="9913-ENSBTAP00000055975"/>
<dbReference type="GeneID" id="534423"/>
<dbReference type="KEGG" id="bta:534423"/>
<dbReference type="CTD" id="79794"/>
<dbReference type="VEuPathDB" id="HostDB:ENSBTAG00000047139"/>
<dbReference type="eggNOG" id="KOG3136">
    <property type="taxonomic scope" value="Eukaryota"/>
</dbReference>
<dbReference type="HOGENOM" id="CLU_079455_0_0_1"/>
<dbReference type="InParanoid" id="Q17QN8"/>
<dbReference type="OMA" id="CNTTSHC"/>
<dbReference type="OrthoDB" id="70142at2759"/>
<dbReference type="TreeFam" id="TF323884"/>
<dbReference type="Proteomes" id="UP000009136">
    <property type="component" value="Chromosome 17"/>
</dbReference>
<dbReference type="Bgee" id="ENSBTAG00000047139">
    <property type="expression patterns" value="Expressed in oocyte and 105 other cell types or tissues"/>
</dbReference>
<dbReference type="GO" id="GO:0000139">
    <property type="term" value="C:Golgi membrane"/>
    <property type="evidence" value="ECO:0000250"/>
    <property type="project" value="UniProtKB"/>
</dbReference>
<dbReference type="GO" id="GO:2000640">
    <property type="term" value="P:positive regulation of SREBP signaling pathway"/>
    <property type="evidence" value="ECO:0000250"/>
    <property type="project" value="UniProtKB"/>
</dbReference>
<dbReference type="InterPro" id="IPR019352">
    <property type="entry name" value="SPRING1"/>
</dbReference>
<dbReference type="PANTHER" id="PTHR13481">
    <property type="entry name" value="SREBP REGULATING GENE PROTEIN"/>
    <property type="match status" value="1"/>
</dbReference>
<dbReference type="PANTHER" id="PTHR13481:SF0">
    <property type="entry name" value="SREBP REGULATING GENE PROTEIN"/>
    <property type="match status" value="1"/>
</dbReference>
<dbReference type="Pfam" id="PF10218">
    <property type="entry name" value="SPRING1"/>
    <property type="match status" value="1"/>
</dbReference>
<evidence type="ECO:0000250" key="1">
    <source>
        <dbReference type="UniProtKB" id="Q9H741"/>
    </source>
</evidence>
<evidence type="ECO:0000255" key="2"/>
<evidence type="ECO:0000305" key="3"/>
<comment type="function">
    <text evidence="1">Positively regulates hepatic SREBP signaling pathway by modulating the proper localization of SCAP (SREBP cleavage-activating protein) to the endoplasmic reticulum, thereby controlling the level of functional SCAP.</text>
</comment>
<comment type="subunit">
    <text evidence="1">Interacts with SCAP.</text>
</comment>
<comment type="subcellular location">
    <subcellularLocation>
        <location evidence="1">Golgi apparatus membrane</location>
        <topology evidence="2">Single-pass membrane protein</topology>
    </subcellularLocation>
</comment>
<comment type="similarity">
    <text evidence="3">Belongs to the SPRING family.</text>
</comment>
<organism>
    <name type="scientific">Bos taurus</name>
    <name type="common">Bovine</name>
    <dbReference type="NCBI Taxonomy" id="9913"/>
    <lineage>
        <taxon>Eukaryota</taxon>
        <taxon>Metazoa</taxon>
        <taxon>Chordata</taxon>
        <taxon>Craniata</taxon>
        <taxon>Vertebrata</taxon>
        <taxon>Euteleostomi</taxon>
        <taxon>Mammalia</taxon>
        <taxon>Eutheria</taxon>
        <taxon>Laurasiatheria</taxon>
        <taxon>Artiodactyla</taxon>
        <taxon>Ruminantia</taxon>
        <taxon>Pecora</taxon>
        <taxon>Bovidae</taxon>
        <taxon>Bovinae</taxon>
        <taxon>Bos</taxon>
    </lineage>
</organism>